<dbReference type="EC" id="4.3.1.3" evidence="1"/>
<dbReference type="EMBL" id="CP000143">
    <property type="protein sequence ID" value="ABA79095.1"/>
    <property type="molecule type" value="Genomic_DNA"/>
</dbReference>
<dbReference type="RefSeq" id="WP_011337859.1">
    <property type="nucleotide sequence ID" value="NC_007493.2"/>
</dbReference>
<dbReference type="RefSeq" id="YP_352996.1">
    <property type="nucleotide sequence ID" value="NC_007493.2"/>
</dbReference>
<dbReference type="SMR" id="Q3J289"/>
<dbReference type="STRING" id="272943.RSP_2935"/>
<dbReference type="EnsemblBacteria" id="ABA79095">
    <property type="protein sequence ID" value="ABA79095"/>
    <property type="gene ID" value="RSP_2935"/>
</dbReference>
<dbReference type="GeneID" id="3720675"/>
<dbReference type="KEGG" id="rsp:RSP_2935"/>
<dbReference type="PATRIC" id="fig|272943.9.peg.1871"/>
<dbReference type="eggNOG" id="COG2986">
    <property type="taxonomic scope" value="Bacteria"/>
</dbReference>
<dbReference type="OrthoDB" id="9806955at2"/>
<dbReference type="PhylomeDB" id="Q3J289"/>
<dbReference type="UniPathway" id="UPA00379">
    <property type="reaction ID" value="UER00549"/>
</dbReference>
<dbReference type="Proteomes" id="UP000002703">
    <property type="component" value="Chromosome 1"/>
</dbReference>
<dbReference type="GO" id="GO:0005737">
    <property type="term" value="C:cytoplasm"/>
    <property type="evidence" value="ECO:0007669"/>
    <property type="project" value="UniProtKB-SubCell"/>
</dbReference>
<dbReference type="GO" id="GO:0004397">
    <property type="term" value="F:histidine ammonia-lyase activity"/>
    <property type="evidence" value="ECO:0007669"/>
    <property type="project" value="UniProtKB-UniRule"/>
</dbReference>
<dbReference type="GO" id="GO:0019556">
    <property type="term" value="P:L-histidine catabolic process to glutamate and formamide"/>
    <property type="evidence" value="ECO:0007669"/>
    <property type="project" value="UniProtKB-UniPathway"/>
</dbReference>
<dbReference type="GO" id="GO:0019557">
    <property type="term" value="P:L-histidine catabolic process to glutamate and formate"/>
    <property type="evidence" value="ECO:0007669"/>
    <property type="project" value="UniProtKB-UniPathway"/>
</dbReference>
<dbReference type="CDD" id="cd00332">
    <property type="entry name" value="PAL-HAL"/>
    <property type="match status" value="1"/>
</dbReference>
<dbReference type="FunFam" id="1.10.275.10:FF:000005">
    <property type="entry name" value="Histidine ammonia-lyase"/>
    <property type="match status" value="1"/>
</dbReference>
<dbReference type="FunFam" id="1.20.200.10:FF:000003">
    <property type="entry name" value="Histidine ammonia-lyase"/>
    <property type="match status" value="1"/>
</dbReference>
<dbReference type="Gene3D" id="1.20.200.10">
    <property type="entry name" value="Fumarase/aspartase (Central domain)"/>
    <property type="match status" value="1"/>
</dbReference>
<dbReference type="Gene3D" id="1.10.275.10">
    <property type="entry name" value="Fumarase/aspartase (N-terminal domain)"/>
    <property type="match status" value="1"/>
</dbReference>
<dbReference type="HAMAP" id="MF_00229">
    <property type="entry name" value="His_ammonia_lyase"/>
    <property type="match status" value="1"/>
</dbReference>
<dbReference type="InterPro" id="IPR001106">
    <property type="entry name" value="Aromatic_Lyase"/>
</dbReference>
<dbReference type="InterPro" id="IPR024083">
    <property type="entry name" value="Fumarase/histidase_N"/>
</dbReference>
<dbReference type="InterPro" id="IPR005921">
    <property type="entry name" value="HutH"/>
</dbReference>
<dbReference type="InterPro" id="IPR008948">
    <property type="entry name" value="L-Aspartase-like"/>
</dbReference>
<dbReference type="InterPro" id="IPR022313">
    <property type="entry name" value="Phe/His_NH3-lyase_AS"/>
</dbReference>
<dbReference type="NCBIfam" id="TIGR01225">
    <property type="entry name" value="hutH"/>
    <property type="match status" value="1"/>
</dbReference>
<dbReference type="NCBIfam" id="NF006871">
    <property type="entry name" value="PRK09367.1"/>
    <property type="match status" value="1"/>
</dbReference>
<dbReference type="PANTHER" id="PTHR10362">
    <property type="entry name" value="HISTIDINE AMMONIA-LYASE"/>
    <property type="match status" value="1"/>
</dbReference>
<dbReference type="Pfam" id="PF00221">
    <property type="entry name" value="Lyase_aromatic"/>
    <property type="match status" value="1"/>
</dbReference>
<dbReference type="SUPFAM" id="SSF48557">
    <property type="entry name" value="L-aspartase-like"/>
    <property type="match status" value="1"/>
</dbReference>
<dbReference type="PROSITE" id="PS00488">
    <property type="entry name" value="PAL_HISTIDASE"/>
    <property type="match status" value="1"/>
</dbReference>
<evidence type="ECO:0000255" key="1">
    <source>
        <dbReference type="HAMAP-Rule" id="MF_00229"/>
    </source>
</evidence>
<feature type="chain" id="PRO_0000336586" description="Histidine ammonia-lyase">
    <location>
        <begin position="1"/>
        <end position="507"/>
    </location>
</feature>
<feature type="modified residue" description="2,3-didehydroalanine (Ser)" evidence="1">
    <location>
        <position position="142"/>
    </location>
</feature>
<feature type="cross-link" description="5-imidazolinone (Ala-Gly)" evidence="1">
    <location>
        <begin position="141"/>
        <end position="143"/>
    </location>
</feature>
<comment type="catalytic activity">
    <reaction evidence="1">
        <text>L-histidine = trans-urocanate + NH4(+)</text>
        <dbReference type="Rhea" id="RHEA:21232"/>
        <dbReference type="ChEBI" id="CHEBI:17771"/>
        <dbReference type="ChEBI" id="CHEBI:28938"/>
        <dbReference type="ChEBI" id="CHEBI:57595"/>
        <dbReference type="EC" id="4.3.1.3"/>
    </reaction>
</comment>
<comment type="pathway">
    <text evidence="1">Amino-acid degradation; L-histidine degradation into L-glutamate; N-formimidoyl-L-glutamate from L-histidine: step 1/3.</text>
</comment>
<comment type="subcellular location">
    <subcellularLocation>
        <location evidence="1">Cytoplasm</location>
    </subcellularLocation>
</comment>
<comment type="PTM">
    <text evidence="1">Contains an active site 4-methylidene-imidazol-5-one (MIO), which is formed autocatalytically by cyclization and dehydration of residues Ala-Ser-Gly.</text>
</comment>
<comment type="similarity">
    <text evidence="1">Belongs to the PAL/histidase family.</text>
</comment>
<protein>
    <recommendedName>
        <fullName evidence="1">Histidine ammonia-lyase</fullName>
        <shortName evidence="1">Histidase</shortName>
        <ecNumber evidence="1">4.3.1.3</ecNumber>
    </recommendedName>
</protein>
<keyword id="KW-0963">Cytoplasm</keyword>
<keyword id="KW-0369">Histidine metabolism</keyword>
<keyword id="KW-0456">Lyase</keyword>
<keyword id="KW-1185">Reference proteome</keyword>
<proteinExistence type="inferred from homology"/>
<gene>
    <name evidence="1" type="primary">hutH</name>
    <name type="ordered locus">RHOS4_15270</name>
    <name type="ORF">RSP_2935</name>
</gene>
<sequence>MEILVPGQATLAQLEAIWREGRRARLAPEARPAVEAAAARVAEAAAGTAPVYGVNTGFGKLASLKIAPADTAQLQRNLILSHCCGVGEPMPPSTARLMIALKLLSLGRGASGVRWEIVALLEGMLAAGVTPVIPAQGSVGASGDLAPLAHMAAVMIGEGEAEVGGRRLPGAAALAEAGLAPVALGPKEGLALINGTQFSTAYALAGLFEGWRAAQAALVISALSTDAIMGSTAPLRPEIHALRGHAGQIEAAATMRALLEGSAIRESHREGDQRVQDPYCIRCQPQVTGAAMDVLRMAAGTLATEANAATDNPLVLSDGRIVSGGNFHAEPVGFAADMIALALSEIGAIAQRRVALMVDPTLSFDLPPFLTPEPGLNSGLMIAEVTTAALMSENKHMAAPTVTDSTPTSANQEDHVSMAAHGARRLGRMVENLAVILGTEAICAAQGVEFRAPLATSAPLGAVLARLRAEVPRIAADRILAPDLAAAARLVRTGALARAAGLPFPAL</sequence>
<name>HUTH_CERS4</name>
<accession>Q3J289</accession>
<organism>
    <name type="scientific">Cereibacter sphaeroides (strain ATCC 17023 / DSM 158 / JCM 6121 / CCUG 31486 / LMG 2827 / NBRC 12203 / NCIMB 8253 / ATH 2.4.1.)</name>
    <name type="common">Rhodobacter sphaeroides</name>
    <dbReference type="NCBI Taxonomy" id="272943"/>
    <lineage>
        <taxon>Bacteria</taxon>
        <taxon>Pseudomonadati</taxon>
        <taxon>Pseudomonadota</taxon>
        <taxon>Alphaproteobacteria</taxon>
        <taxon>Rhodobacterales</taxon>
        <taxon>Paracoccaceae</taxon>
        <taxon>Cereibacter</taxon>
    </lineage>
</organism>
<reference key="1">
    <citation type="submission" date="2005-09" db="EMBL/GenBank/DDBJ databases">
        <title>Complete sequence of chromosome 1 of Rhodobacter sphaeroides 2.4.1.</title>
        <authorList>
            <person name="Copeland A."/>
            <person name="Lucas S."/>
            <person name="Lapidus A."/>
            <person name="Barry K."/>
            <person name="Detter J.C."/>
            <person name="Glavina T."/>
            <person name="Hammon N."/>
            <person name="Israni S."/>
            <person name="Pitluck S."/>
            <person name="Richardson P."/>
            <person name="Mackenzie C."/>
            <person name="Choudhary M."/>
            <person name="Larimer F."/>
            <person name="Hauser L.J."/>
            <person name="Land M."/>
            <person name="Donohue T.J."/>
            <person name="Kaplan S."/>
        </authorList>
    </citation>
    <scope>NUCLEOTIDE SEQUENCE [LARGE SCALE GENOMIC DNA]</scope>
    <source>
        <strain>ATCC 17023 / DSM 158 / JCM 6121 / CCUG 31486 / LMG 2827 / NBRC 12203 / NCIMB 8253 / ATH 2.4.1.</strain>
    </source>
</reference>